<dbReference type="EMBL" id="BA000017">
    <property type="protein sequence ID" value="BAB56258.1"/>
    <property type="status" value="ALT_INIT"/>
    <property type="molecule type" value="Genomic_DNA"/>
</dbReference>
<dbReference type="SMR" id="Q99XB6"/>
<dbReference type="KEGG" id="sav:SAV0096"/>
<dbReference type="HOGENOM" id="CLU_071589_0_1_9"/>
<dbReference type="Proteomes" id="UP000002481">
    <property type="component" value="Chromosome"/>
</dbReference>
<dbReference type="GO" id="GO:0005886">
    <property type="term" value="C:plasma membrane"/>
    <property type="evidence" value="ECO:0007669"/>
    <property type="project" value="UniProtKB-SubCell"/>
</dbReference>
<dbReference type="Gene3D" id="2.50.20.40">
    <property type="match status" value="1"/>
</dbReference>
<dbReference type="InterPro" id="IPR007595">
    <property type="entry name" value="Csa"/>
</dbReference>
<dbReference type="InterPro" id="IPR038641">
    <property type="entry name" value="Csa_sf"/>
</dbReference>
<dbReference type="NCBIfam" id="TIGR01742">
    <property type="entry name" value="SA_tandem_lipo"/>
    <property type="match status" value="1"/>
</dbReference>
<dbReference type="Pfam" id="PF04507">
    <property type="entry name" value="DUF576"/>
    <property type="match status" value="1"/>
</dbReference>
<dbReference type="PROSITE" id="PS51257">
    <property type="entry name" value="PROKAR_LIPOPROTEIN"/>
    <property type="match status" value="1"/>
</dbReference>
<proteinExistence type="inferred from homology"/>
<reference key="1">
    <citation type="journal article" date="2001" name="Lancet">
        <title>Whole genome sequencing of meticillin-resistant Staphylococcus aureus.</title>
        <authorList>
            <person name="Kuroda M."/>
            <person name="Ohta T."/>
            <person name="Uchiyama I."/>
            <person name="Baba T."/>
            <person name="Yuzawa H."/>
            <person name="Kobayashi I."/>
            <person name="Cui L."/>
            <person name="Oguchi A."/>
            <person name="Aoki K."/>
            <person name="Nagai Y."/>
            <person name="Lian J.-Q."/>
            <person name="Ito T."/>
            <person name="Kanamori M."/>
            <person name="Matsumaru H."/>
            <person name="Maruyama A."/>
            <person name="Murakami H."/>
            <person name="Hosoyama A."/>
            <person name="Mizutani-Ui Y."/>
            <person name="Takahashi N.K."/>
            <person name="Sawano T."/>
            <person name="Inoue R."/>
            <person name="Kaito C."/>
            <person name="Sekimizu K."/>
            <person name="Hirakawa H."/>
            <person name="Kuhara S."/>
            <person name="Goto S."/>
            <person name="Yabuzaki J."/>
            <person name="Kanehisa M."/>
            <person name="Yamashita A."/>
            <person name="Oshima K."/>
            <person name="Furuya K."/>
            <person name="Yoshino C."/>
            <person name="Shiba T."/>
            <person name="Hattori M."/>
            <person name="Ogasawara N."/>
            <person name="Hayashi H."/>
            <person name="Hiramatsu K."/>
        </authorList>
    </citation>
    <scope>NUCLEOTIDE SEQUENCE [LARGE SCALE GENOMIC DNA]</scope>
    <source>
        <strain>Mu50 / ATCC 700699</strain>
    </source>
</reference>
<name>Y096_STAAM</name>
<feature type="signal peptide" evidence="1">
    <location>
        <begin position="1"/>
        <end position="23"/>
    </location>
</feature>
<feature type="chain" id="PRO_0000282113" description="Uncharacterized lipoprotein SAV0096">
    <location>
        <begin position="24"/>
        <end position="255"/>
    </location>
</feature>
<feature type="lipid moiety-binding region" description="N-palmitoyl cysteine" evidence="1">
    <location>
        <position position="24"/>
    </location>
</feature>
<feature type="lipid moiety-binding region" description="S-diacylglycerol cysteine" evidence="1">
    <location>
        <position position="24"/>
    </location>
</feature>
<gene>
    <name type="ordered locus">SAV0096</name>
</gene>
<comment type="subcellular location">
    <subcellularLocation>
        <location evidence="1">Cell membrane</location>
        <topology evidence="1">Lipid-anchor</topology>
    </subcellularLocation>
</comment>
<comment type="similarity">
    <text evidence="2">Belongs to the staphylococcal tandem lipoprotein family.</text>
</comment>
<comment type="sequence caution" evidence="2">
    <conflict type="erroneous initiation">
        <sequence resource="EMBL-CDS" id="BAB56258"/>
    </conflict>
</comment>
<sequence>MKRLNKLVLGIIFLFLVISITAGCGIGKEAEVKKSFEKTLSMYPIKNLEDLYDKEGYRDDQFDKNDKGTWIINSEMVIQPNNEDMVAKGMVLYMNRNTKTTNGYYYVDVTKDEDEGKPHDNEKRYPVKMVDNKIIPTKEIKDKNIKKEIENFKFFVQYGNFKDLSKYKDGDISYNPEVPSYSAKYQVTNDDYNVKQLRKRYDIPTNKAPKLLLKGTGNLKGSSVGYKDIEFTFVEKKGENIYFSDSLHLEPSEDK</sequence>
<evidence type="ECO:0000255" key="1">
    <source>
        <dbReference type="PROSITE-ProRule" id="PRU00303"/>
    </source>
</evidence>
<evidence type="ECO:0000305" key="2"/>
<keyword id="KW-1003">Cell membrane</keyword>
<keyword id="KW-0449">Lipoprotein</keyword>
<keyword id="KW-0472">Membrane</keyword>
<keyword id="KW-0564">Palmitate</keyword>
<keyword id="KW-0732">Signal</keyword>
<accession>Q99XB6</accession>
<organism>
    <name type="scientific">Staphylococcus aureus (strain Mu50 / ATCC 700699)</name>
    <dbReference type="NCBI Taxonomy" id="158878"/>
    <lineage>
        <taxon>Bacteria</taxon>
        <taxon>Bacillati</taxon>
        <taxon>Bacillota</taxon>
        <taxon>Bacilli</taxon>
        <taxon>Bacillales</taxon>
        <taxon>Staphylococcaceae</taxon>
        <taxon>Staphylococcus</taxon>
    </lineage>
</organism>
<protein>
    <recommendedName>
        <fullName>Uncharacterized lipoprotein SAV0096</fullName>
    </recommendedName>
</protein>